<protein>
    <recommendedName>
        <fullName evidence="1">Bifunctional purine biosynthesis protein PurH</fullName>
    </recommendedName>
    <domain>
        <recommendedName>
            <fullName evidence="1">Phosphoribosylaminoimidazolecarboxamide formyltransferase</fullName>
            <ecNumber evidence="1">2.1.2.3</ecNumber>
        </recommendedName>
        <alternativeName>
            <fullName evidence="1">AICAR transformylase</fullName>
        </alternativeName>
    </domain>
    <domain>
        <recommendedName>
            <fullName evidence="1">IMP cyclohydrolase</fullName>
            <ecNumber evidence="1">3.5.4.10</ecNumber>
        </recommendedName>
        <alternativeName>
            <fullName evidence="1">ATIC</fullName>
        </alternativeName>
        <alternativeName>
            <fullName evidence="1">IMP synthase</fullName>
        </alternativeName>
        <alternativeName>
            <fullName evidence="1">Inosinicase</fullName>
        </alternativeName>
    </domain>
</protein>
<reference key="1">
    <citation type="journal article" date="2001" name="Nature">
        <title>Massive gene decay in the leprosy bacillus.</title>
        <authorList>
            <person name="Cole S.T."/>
            <person name="Eiglmeier K."/>
            <person name="Parkhill J."/>
            <person name="James K.D."/>
            <person name="Thomson N.R."/>
            <person name="Wheeler P.R."/>
            <person name="Honore N."/>
            <person name="Garnier T."/>
            <person name="Churcher C.M."/>
            <person name="Harris D.E."/>
            <person name="Mungall K.L."/>
            <person name="Basham D."/>
            <person name="Brown D."/>
            <person name="Chillingworth T."/>
            <person name="Connor R."/>
            <person name="Davies R.M."/>
            <person name="Devlin K."/>
            <person name="Duthoy S."/>
            <person name="Feltwell T."/>
            <person name="Fraser A."/>
            <person name="Hamlin N."/>
            <person name="Holroyd S."/>
            <person name="Hornsby T."/>
            <person name="Jagels K."/>
            <person name="Lacroix C."/>
            <person name="Maclean J."/>
            <person name="Moule S."/>
            <person name="Murphy L.D."/>
            <person name="Oliver K."/>
            <person name="Quail M.A."/>
            <person name="Rajandream M.A."/>
            <person name="Rutherford K.M."/>
            <person name="Rutter S."/>
            <person name="Seeger K."/>
            <person name="Simon S."/>
            <person name="Simmonds M."/>
            <person name="Skelton J."/>
            <person name="Squares R."/>
            <person name="Squares S."/>
            <person name="Stevens K."/>
            <person name="Taylor K."/>
            <person name="Whitehead S."/>
            <person name="Woodward J.R."/>
            <person name="Barrell B.G."/>
        </authorList>
    </citation>
    <scope>NUCLEOTIDE SEQUENCE [LARGE SCALE GENOMIC DNA]</scope>
    <source>
        <strain>TN</strain>
    </source>
</reference>
<dbReference type="EC" id="2.1.2.3" evidence="1"/>
<dbReference type="EC" id="3.5.4.10" evidence="1"/>
<dbReference type="EMBL" id="AL035500">
    <property type="protein sequence ID" value="CAB36671.1"/>
    <property type="molecule type" value="Genomic_DNA"/>
</dbReference>
<dbReference type="EMBL" id="AL583917">
    <property type="protein sequence ID" value="CAC29669.1"/>
    <property type="molecule type" value="Genomic_DNA"/>
</dbReference>
<dbReference type="PIR" id="T45439">
    <property type="entry name" value="T45439"/>
</dbReference>
<dbReference type="RefSeq" id="NP_301246.1">
    <property type="nucleotide sequence ID" value="NC_002677.1"/>
</dbReference>
<dbReference type="RefSeq" id="WP_010907571.1">
    <property type="nucleotide sequence ID" value="NC_002677.1"/>
</dbReference>
<dbReference type="SMR" id="Q9Z5H5"/>
<dbReference type="STRING" id="272631.gene:17573976"/>
<dbReference type="KEGG" id="mle:ML0161"/>
<dbReference type="PATRIC" id="fig|272631.5.peg.248"/>
<dbReference type="Leproma" id="ML0161"/>
<dbReference type="eggNOG" id="COG0138">
    <property type="taxonomic scope" value="Bacteria"/>
</dbReference>
<dbReference type="HOGENOM" id="CLU_016316_5_2_11"/>
<dbReference type="OrthoDB" id="9802065at2"/>
<dbReference type="UniPathway" id="UPA00074">
    <property type="reaction ID" value="UER00133"/>
</dbReference>
<dbReference type="UniPathway" id="UPA00074">
    <property type="reaction ID" value="UER00135"/>
</dbReference>
<dbReference type="Proteomes" id="UP000000806">
    <property type="component" value="Chromosome"/>
</dbReference>
<dbReference type="GO" id="GO:0005829">
    <property type="term" value="C:cytosol"/>
    <property type="evidence" value="ECO:0007669"/>
    <property type="project" value="TreeGrafter"/>
</dbReference>
<dbReference type="GO" id="GO:0003937">
    <property type="term" value="F:IMP cyclohydrolase activity"/>
    <property type="evidence" value="ECO:0007669"/>
    <property type="project" value="UniProtKB-UniRule"/>
</dbReference>
<dbReference type="GO" id="GO:0004643">
    <property type="term" value="F:phosphoribosylaminoimidazolecarboxamide formyltransferase activity"/>
    <property type="evidence" value="ECO:0007669"/>
    <property type="project" value="UniProtKB-UniRule"/>
</dbReference>
<dbReference type="GO" id="GO:0006189">
    <property type="term" value="P:'de novo' IMP biosynthetic process"/>
    <property type="evidence" value="ECO:0007669"/>
    <property type="project" value="UniProtKB-UniRule"/>
</dbReference>
<dbReference type="CDD" id="cd01421">
    <property type="entry name" value="IMPCH"/>
    <property type="match status" value="1"/>
</dbReference>
<dbReference type="FunFam" id="3.40.140.20:FF:000001">
    <property type="entry name" value="Bifunctional purine biosynthesis protein PurH"/>
    <property type="match status" value="1"/>
</dbReference>
<dbReference type="FunFam" id="3.40.50.1380:FF:000001">
    <property type="entry name" value="Bifunctional purine biosynthesis protein PurH"/>
    <property type="match status" value="1"/>
</dbReference>
<dbReference type="Gene3D" id="3.40.140.20">
    <property type="match status" value="2"/>
</dbReference>
<dbReference type="Gene3D" id="3.40.50.1380">
    <property type="entry name" value="Methylglyoxal synthase-like domain"/>
    <property type="match status" value="1"/>
</dbReference>
<dbReference type="HAMAP" id="MF_00139">
    <property type="entry name" value="PurH"/>
    <property type="match status" value="1"/>
</dbReference>
<dbReference type="InterPro" id="IPR024051">
    <property type="entry name" value="AICAR_Tfase_dup_dom_sf"/>
</dbReference>
<dbReference type="InterPro" id="IPR016193">
    <property type="entry name" value="Cytidine_deaminase-like"/>
</dbReference>
<dbReference type="InterPro" id="IPR011607">
    <property type="entry name" value="MGS-like_dom"/>
</dbReference>
<dbReference type="InterPro" id="IPR036914">
    <property type="entry name" value="MGS-like_dom_sf"/>
</dbReference>
<dbReference type="InterPro" id="IPR002695">
    <property type="entry name" value="PurH-like"/>
</dbReference>
<dbReference type="NCBIfam" id="NF002049">
    <property type="entry name" value="PRK00881.1"/>
    <property type="match status" value="1"/>
</dbReference>
<dbReference type="NCBIfam" id="TIGR00355">
    <property type="entry name" value="purH"/>
    <property type="match status" value="1"/>
</dbReference>
<dbReference type="PANTHER" id="PTHR11692:SF0">
    <property type="entry name" value="BIFUNCTIONAL PURINE BIOSYNTHESIS PROTEIN ATIC"/>
    <property type="match status" value="1"/>
</dbReference>
<dbReference type="PANTHER" id="PTHR11692">
    <property type="entry name" value="BIFUNCTIONAL PURINE BIOSYNTHESIS PROTEIN PURH"/>
    <property type="match status" value="1"/>
</dbReference>
<dbReference type="Pfam" id="PF01808">
    <property type="entry name" value="AICARFT_IMPCHas"/>
    <property type="match status" value="1"/>
</dbReference>
<dbReference type="Pfam" id="PF02142">
    <property type="entry name" value="MGS"/>
    <property type="match status" value="1"/>
</dbReference>
<dbReference type="PIRSF" id="PIRSF000414">
    <property type="entry name" value="AICARFT_IMPCHas"/>
    <property type="match status" value="1"/>
</dbReference>
<dbReference type="SMART" id="SM00798">
    <property type="entry name" value="AICARFT_IMPCHas"/>
    <property type="match status" value="1"/>
</dbReference>
<dbReference type="SMART" id="SM00851">
    <property type="entry name" value="MGS"/>
    <property type="match status" value="1"/>
</dbReference>
<dbReference type="SUPFAM" id="SSF53927">
    <property type="entry name" value="Cytidine deaminase-like"/>
    <property type="match status" value="1"/>
</dbReference>
<dbReference type="SUPFAM" id="SSF52335">
    <property type="entry name" value="Methylglyoxal synthase-like"/>
    <property type="match status" value="1"/>
</dbReference>
<dbReference type="PROSITE" id="PS51855">
    <property type="entry name" value="MGS"/>
    <property type="match status" value="1"/>
</dbReference>
<comment type="catalytic activity">
    <reaction evidence="1">
        <text>(6R)-10-formyltetrahydrofolate + 5-amino-1-(5-phospho-beta-D-ribosyl)imidazole-4-carboxamide = 5-formamido-1-(5-phospho-D-ribosyl)imidazole-4-carboxamide + (6S)-5,6,7,8-tetrahydrofolate</text>
        <dbReference type="Rhea" id="RHEA:22192"/>
        <dbReference type="ChEBI" id="CHEBI:57453"/>
        <dbReference type="ChEBI" id="CHEBI:58467"/>
        <dbReference type="ChEBI" id="CHEBI:58475"/>
        <dbReference type="ChEBI" id="CHEBI:195366"/>
        <dbReference type="EC" id="2.1.2.3"/>
    </reaction>
</comment>
<comment type="catalytic activity">
    <reaction evidence="1">
        <text>IMP + H2O = 5-formamido-1-(5-phospho-D-ribosyl)imidazole-4-carboxamide</text>
        <dbReference type="Rhea" id="RHEA:18445"/>
        <dbReference type="ChEBI" id="CHEBI:15377"/>
        <dbReference type="ChEBI" id="CHEBI:58053"/>
        <dbReference type="ChEBI" id="CHEBI:58467"/>
        <dbReference type="EC" id="3.5.4.10"/>
    </reaction>
</comment>
<comment type="pathway">
    <text evidence="1">Purine metabolism; IMP biosynthesis via de novo pathway; 5-formamido-1-(5-phospho-D-ribosyl)imidazole-4-carboxamide from 5-amino-1-(5-phospho-D-ribosyl)imidazole-4-carboxamide (10-formyl THF route): step 1/1.</text>
</comment>
<comment type="pathway">
    <text evidence="1">Purine metabolism; IMP biosynthesis via de novo pathway; IMP from 5-formamido-1-(5-phospho-D-ribosyl)imidazole-4-carboxamide: step 1/1.</text>
</comment>
<comment type="domain">
    <text evidence="1">The IMP cyclohydrolase activity resides in the N-terminal region.</text>
</comment>
<comment type="similarity">
    <text evidence="1 3">Belongs to the PurH family.</text>
</comment>
<gene>
    <name evidence="1" type="primary">purH</name>
    <name type="ordered locus">ML0161</name>
    <name type="ORF">MLCB373.09</name>
</gene>
<sequence>MSSDGERDMARKPIRRALISVYDKTGLIDLAQGLNAAGVDIVSTGSTAKAIADQGIAVTPVEELTGFPEVLDGRVKTLHPRVHAGLLADLRKPEHAAALEQLGIEAFELVVVNLYPFSQTVKSGATVDECVEQIDIGGSSMVRAAAKNHPSVAVVTDPLGYVGVLAAVQGGGFTLAERKMLASMAFQHIAEYEIAVASWMQSTLAPEQPPTAFPQWFGRSWRRSAILRYGENPHQQAALYSDPSACPGLAQAEQLHGKNMSYNNFTDADAAWRAAFDHEQSCVAIIKHANPCGIAISSLSVADAHRKAHECDPLSAYGGVIAANTEVSLEMAEYVSTIFTEVIVAPSYAPGAVDVLSCKKNVRVLVASAPLRGGSELRPVSGGLLIQQPDQLDTAGDNPANWTLATGSPAGPATLTDLVFAWRACRAVKSNAIVIAADGATIGVGMGQVNRVDAARLAVERGGDRVRGAVVASDAFFPFADGLQTLAAAGVTAIVHPGGSVRDAEVTAAATKAGVTLYLTGVRHFVH</sequence>
<proteinExistence type="inferred from homology"/>
<evidence type="ECO:0000255" key="1">
    <source>
        <dbReference type="HAMAP-Rule" id="MF_00139"/>
    </source>
</evidence>
<evidence type="ECO:0000255" key="2">
    <source>
        <dbReference type="PROSITE-ProRule" id="PRU01202"/>
    </source>
</evidence>
<evidence type="ECO:0000305" key="3"/>
<feature type="chain" id="PRO_0000192104" description="Bifunctional purine biosynthesis protein PurH">
    <location>
        <begin position="1"/>
        <end position="527"/>
    </location>
</feature>
<feature type="domain" description="MGS-like" evidence="2">
    <location>
        <begin position="9"/>
        <end position="156"/>
    </location>
</feature>
<accession>Q9Z5H5</accession>
<name>PUR9_MYCLE</name>
<keyword id="KW-0378">Hydrolase</keyword>
<keyword id="KW-0511">Multifunctional enzyme</keyword>
<keyword id="KW-0658">Purine biosynthesis</keyword>
<keyword id="KW-1185">Reference proteome</keyword>
<keyword id="KW-0808">Transferase</keyword>
<organism>
    <name type="scientific">Mycobacterium leprae (strain TN)</name>
    <dbReference type="NCBI Taxonomy" id="272631"/>
    <lineage>
        <taxon>Bacteria</taxon>
        <taxon>Bacillati</taxon>
        <taxon>Actinomycetota</taxon>
        <taxon>Actinomycetes</taxon>
        <taxon>Mycobacteriales</taxon>
        <taxon>Mycobacteriaceae</taxon>
        <taxon>Mycobacterium</taxon>
    </lineage>
</organism>